<comment type="function">
    <text evidence="2 3 4 8">Beta-apo-4'-carotenal oxygenase involved in the last step of synthesis of neurosporaxanthin, a carboxylic apocarotenoid acting as an essential protective pigment and leading to orange pigmentation (PubMed:18627463, PubMed:18812228, PubMed:19007949). Converts the aldehyde beta-apo-4'-carotenal into neurosporaxanthin (PubMed:18627463, PubMed:18812228, PubMed:19007949). Neurosporaxanthin is synthesized from geranyl-geranyl pyrophosphate (GGPP) through several enzymatic activities. Phytoene synthase activity performed by the bifunctional enzyme al-2 first produces phytoene from geranyl-geranyl pyrophosphate (GGPP). The phytoene dehydrogenase al-1 then introduces 5 desaturations to lead to 3,4-didehydrolycopene via the intermediates phytofluene, zeta-carotene, neurosporene and lycopene. Al-2 cyclase activity then converts 3,4-didehydrolycopene into torulene. Al-2 can also convet lycopene into gamma-carotene which in turn is converted to beta-carotene by an additional al-2 cyclization reaction. Torulene is the substrate of the dioxidase cao-2 that breaks the molecule, removing five carbon atoms to yield beta-apo-4'-carotenal, whereas the aldehyde dehydrogenase ylo-1 mediates the last step by converting beta-apo-4'-carotenal into neurosporaxanthin (Probable).</text>
</comment>
<comment type="catalytic activity">
    <reaction evidence="2">
        <text>4'-apo-beta-carotenal + NAD(+) + H2O = neurosporaxanthin + NADH + 2 H(+)</text>
        <dbReference type="Rhea" id="RHEA:31515"/>
        <dbReference type="ChEBI" id="CHEBI:15377"/>
        <dbReference type="ChEBI" id="CHEBI:15378"/>
        <dbReference type="ChEBI" id="CHEBI:53157"/>
        <dbReference type="ChEBI" id="CHEBI:57540"/>
        <dbReference type="ChEBI" id="CHEBI:57945"/>
        <dbReference type="ChEBI" id="CHEBI:63069"/>
        <dbReference type="EC" id="1.2.1.82"/>
    </reaction>
</comment>
<comment type="induction">
    <text evidence="2">Is not regulated by light unlike the genes responsible for the preceding reactions in the carotenoid pathway.</text>
</comment>
<comment type="similarity">
    <text evidence="7">Belongs to the aldehyde dehydrogenase family.</text>
</comment>
<comment type="sequence caution" evidence="7">
    <conflict type="erroneous gene model prediction">
        <sequence resource="EMBL-CDS" id="ESA42261"/>
    </conflict>
</comment>
<sequence length="533" mass="59504">MAASKVEIAPFEVTPLDAIPAVCSTARATFASHKTKNLQWRLVQLRKLYWALDDFKASLMAALQQDLRKGGYESDFTEVDWVKNDCLHMINNLETFAKTEKLKDLPVTYSMMNFRVKKEPLGTVLIIGPYNFPIQLVLAPLVGAIGAGCTAVIKPSELTPACAMAMKEMIESRLDRDAFAVVNGGVPETNALMEEKWDKIMFTGSAQVGSIIARKAAETLTPVCLELGGRNPAFVTKKANLALAARRLMWGKVLNAGQVCMSHNYVLVDKDVADTFIEFLKIAYKDMFPNGAKASPDLSRIVNARHFNRIKKMLDETKGKIVMGGEMDESELYIEPTAVLVDSLDDPMMQEESFGPIFSIYPVDTLDQALSIANNVHRTPLALMAFGDKSETNRILDEMTSGGACINDSYFHGAVHTVPFGGVGDSGWGAYRGKASFDNFTHFRTVSETPTWMDRFLRVRYMPYDWSELRLLQRWTNKKPNFDRQGTVAKGSEYWMWYFLGLGTKGGVKGALMRWLVVVAGYYLSAYMKARRA</sequence>
<feature type="chain" id="PRO_0000418442" description="Beta-apo-4'-carotenal oxygenase">
    <location>
        <begin position="1"/>
        <end position="533"/>
    </location>
</feature>
<feature type="active site" evidence="1">
    <location>
        <position position="226"/>
    </location>
</feature>
<feature type="active site" evidence="1">
    <location>
        <position position="260"/>
    </location>
</feature>
<proteinExistence type="evidence at protein level"/>
<reference key="1">
    <citation type="journal article" date="2003" name="Nature">
        <title>The genome sequence of the filamentous fungus Neurospora crassa.</title>
        <authorList>
            <person name="Galagan J.E."/>
            <person name="Calvo S.E."/>
            <person name="Borkovich K.A."/>
            <person name="Selker E.U."/>
            <person name="Read N.D."/>
            <person name="Jaffe D.B."/>
            <person name="FitzHugh W."/>
            <person name="Ma L.-J."/>
            <person name="Smirnov S."/>
            <person name="Purcell S."/>
            <person name="Rehman B."/>
            <person name="Elkins T."/>
            <person name="Engels R."/>
            <person name="Wang S."/>
            <person name="Nielsen C.B."/>
            <person name="Butler J."/>
            <person name="Endrizzi M."/>
            <person name="Qui D."/>
            <person name="Ianakiev P."/>
            <person name="Bell-Pedersen D."/>
            <person name="Nelson M.A."/>
            <person name="Werner-Washburne M."/>
            <person name="Selitrennikoff C.P."/>
            <person name="Kinsey J.A."/>
            <person name="Braun E.L."/>
            <person name="Zelter A."/>
            <person name="Schulte U."/>
            <person name="Kothe G.O."/>
            <person name="Jedd G."/>
            <person name="Mewes H.-W."/>
            <person name="Staben C."/>
            <person name="Marcotte E."/>
            <person name="Greenberg D."/>
            <person name="Roy A."/>
            <person name="Foley K."/>
            <person name="Naylor J."/>
            <person name="Stange-Thomann N."/>
            <person name="Barrett R."/>
            <person name="Gnerre S."/>
            <person name="Kamal M."/>
            <person name="Kamvysselis M."/>
            <person name="Mauceli E.W."/>
            <person name="Bielke C."/>
            <person name="Rudd S."/>
            <person name="Frishman D."/>
            <person name="Krystofova S."/>
            <person name="Rasmussen C."/>
            <person name="Metzenberg R.L."/>
            <person name="Perkins D.D."/>
            <person name="Kroken S."/>
            <person name="Cogoni C."/>
            <person name="Macino G."/>
            <person name="Catcheside D.E.A."/>
            <person name="Li W."/>
            <person name="Pratt R.J."/>
            <person name="Osmani S.A."/>
            <person name="DeSouza C.P.C."/>
            <person name="Glass N.L."/>
            <person name="Orbach M.J."/>
            <person name="Berglund J.A."/>
            <person name="Voelker R."/>
            <person name="Yarden O."/>
            <person name="Plamann M."/>
            <person name="Seiler S."/>
            <person name="Dunlap J.C."/>
            <person name="Radford A."/>
            <person name="Aramayo R."/>
            <person name="Natvig D.O."/>
            <person name="Alex L.A."/>
            <person name="Mannhaupt G."/>
            <person name="Ebbole D.J."/>
            <person name="Freitag M."/>
            <person name="Paulsen I."/>
            <person name="Sachs M.S."/>
            <person name="Lander E.S."/>
            <person name="Nusbaum C."/>
            <person name="Birren B.W."/>
        </authorList>
    </citation>
    <scope>NUCLEOTIDE SEQUENCE [LARGE SCALE GENOMIC DNA]</scope>
    <source>
        <strain>ATCC 24698 / 74-OR23-1A / CBS 708.71 / DSM 1257 / FGSC 987</strain>
    </source>
</reference>
<reference key="2">
    <citation type="journal article" date="2008" name="Fungal Genet. Biol.">
        <title>Novel apocarotenoid intermediates in Neurospora crassa mutants imply a new biosynthetic reaction sequence leading to neurosporaxanthin formation.</title>
        <authorList>
            <person name="Estrada A.F."/>
            <person name="Maier D."/>
            <person name="Scherzinger D."/>
            <person name="Avalos J."/>
            <person name="Al-Babili S."/>
        </authorList>
    </citation>
    <scope>FUNCTION</scope>
</reference>
<reference key="3">
    <citation type="journal article" date="2008" name="Mol. Microbiol.">
        <title>The ylo-1 gene encodes an aldehyde dehydrogenase responsible for the last reaction in the Neurospora carotenoid pathway.</title>
        <authorList>
            <person name="Estrada A.F."/>
            <person name="Youssar L."/>
            <person name="Scherzinger D."/>
            <person name="Al-Babili S."/>
            <person name="Avalos J."/>
        </authorList>
    </citation>
    <scope>CATALYTIC ACTIVITY</scope>
    <scope>FUNCTION</scope>
    <scope>INDUCTION</scope>
</reference>
<reference key="4">
    <citation type="journal article" date="2008" name="Phytochemistry">
        <title>C(35)-apocarotenoids in the yellow mutant Neurospora crassa YLO.</title>
        <authorList>
            <person name="Sandmann G."/>
            <person name="Takaichi S."/>
            <person name="Fraser P.D."/>
        </authorList>
    </citation>
    <scope>FUNCTION</scope>
</reference>
<organism>
    <name type="scientific">Neurospora crassa (strain ATCC 24698 / 74-OR23-1A / CBS 708.71 / DSM 1257 / FGSC 987)</name>
    <dbReference type="NCBI Taxonomy" id="367110"/>
    <lineage>
        <taxon>Eukaryota</taxon>
        <taxon>Fungi</taxon>
        <taxon>Dikarya</taxon>
        <taxon>Ascomycota</taxon>
        <taxon>Pezizomycotina</taxon>
        <taxon>Sordariomycetes</taxon>
        <taxon>Sordariomycetidae</taxon>
        <taxon>Sordariales</taxon>
        <taxon>Sordariaceae</taxon>
        <taxon>Neurospora</taxon>
    </lineage>
</organism>
<protein>
    <recommendedName>
        <fullName evidence="5">Beta-apo-4'-carotenal oxygenase</fullName>
        <ecNumber evidence="2">1.2.1.82</ecNumber>
    </recommendedName>
    <alternativeName>
        <fullName evidence="5">Aldehyde dehydrogenase ylo-1</fullName>
    </alternativeName>
    <alternativeName>
        <fullName evidence="5">Beta-apo-4'-carotenal dehydrogenase</fullName>
    </alternativeName>
    <alternativeName>
        <fullName evidence="6">Yellow protein 1</fullName>
    </alternativeName>
</protein>
<name>CARD_NEUCR</name>
<gene>
    <name evidence="6" type="primary">ylo-1</name>
    <name type="ORF">NCU04013</name>
</gene>
<accession>Q1K615</accession>
<accession>V5IL17</accession>
<accession>V5INB1</accession>
<dbReference type="EC" id="1.2.1.82" evidence="2"/>
<dbReference type="EMBL" id="CM002241">
    <property type="protein sequence ID" value="ESA42261.1"/>
    <property type="status" value="ALT_SEQ"/>
    <property type="molecule type" value="Genomic_DNA"/>
</dbReference>
<dbReference type="EMBL" id="CM002241">
    <property type="protein sequence ID" value="ESA42262.1"/>
    <property type="molecule type" value="Genomic_DNA"/>
</dbReference>
<dbReference type="RefSeq" id="XP_011394899.1">
    <property type="nucleotide sequence ID" value="XM_011396597.1"/>
</dbReference>
<dbReference type="RefSeq" id="XP_011394900.1">
    <property type="nucleotide sequence ID" value="XM_011396598.1"/>
</dbReference>
<dbReference type="SMR" id="Q1K615"/>
<dbReference type="FunCoup" id="Q1K615">
    <property type="interactions" value="418"/>
</dbReference>
<dbReference type="STRING" id="367110.Q1K615"/>
<dbReference type="PaxDb" id="5141-EFNCRP00000003551"/>
<dbReference type="EnsemblFungi" id="ESA42261">
    <property type="protein sequence ID" value="ESA42261"/>
    <property type="gene ID" value="NCU04013"/>
</dbReference>
<dbReference type="EnsemblFungi" id="ESA42262">
    <property type="protein sequence ID" value="ESA42262"/>
    <property type="gene ID" value="NCU04013"/>
</dbReference>
<dbReference type="GeneID" id="3873815"/>
<dbReference type="KEGG" id="ncr:NCU04013"/>
<dbReference type="VEuPathDB" id="FungiDB:NCU04013"/>
<dbReference type="HOGENOM" id="CLU_005391_3_1_1"/>
<dbReference type="InParanoid" id="Q1K615"/>
<dbReference type="OMA" id="EIDWCKQ"/>
<dbReference type="OrthoDB" id="440325at2759"/>
<dbReference type="BRENDA" id="1.2.1.82">
    <property type="organism ID" value="3627"/>
</dbReference>
<dbReference type="Proteomes" id="UP000001805">
    <property type="component" value="Chromosome 5, Linkage Group VI"/>
</dbReference>
<dbReference type="GO" id="GO:0005737">
    <property type="term" value="C:cytoplasm"/>
    <property type="evidence" value="ECO:0000318"/>
    <property type="project" value="GO_Central"/>
</dbReference>
<dbReference type="GO" id="GO:0004029">
    <property type="term" value="F:aldehyde dehydrogenase (NAD+) activity"/>
    <property type="evidence" value="ECO:0000314"/>
    <property type="project" value="UniProt"/>
</dbReference>
<dbReference type="GO" id="GO:0006081">
    <property type="term" value="P:aldehyde metabolic process"/>
    <property type="evidence" value="ECO:0000318"/>
    <property type="project" value="GO_Central"/>
</dbReference>
<dbReference type="GO" id="GO:0016117">
    <property type="term" value="P:carotenoid biosynthetic process"/>
    <property type="evidence" value="ECO:0000314"/>
    <property type="project" value="UniProt"/>
</dbReference>
<dbReference type="CDD" id="cd07135">
    <property type="entry name" value="ALDH_F14-YMR110C"/>
    <property type="match status" value="1"/>
</dbReference>
<dbReference type="FunFam" id="3.40.309.10:FF:000025">
    <property type="entry name" value="Aldehyde dehydrogenase"/>
    <property type="match status" value="1"/>
</dbReference>
<dbReference type="FunFam" id="3.40.605.10:FF:000004">
    <property type="entry name" value="Aldehyde dehydrogenase"/>
    <property type="match status" value="1"/>
</dbReference>
<dbReference type="Gene3D" id="3.40.605.10">
    <property type="entry name" value="Aldehyde Dehydrogenase, Chain A, domain 1"/>
    <property type="match status" value="1"/>
</dbReference>
<dbReference type="Gene3D" id="3.40.309.10">
    <property type="entry name" value="Aldehyde Dehydrogenase, Chain A, domain 2"/>
    <property type="match status" value="1"/>
</dbReference>
<dbReference type="InterPro" id="IPR016161">
    <property type="entry name" value="Ald_DH/histidinol_DH"/>
</dbReference>
<dbReference type="InterPro" id="IPR016163">
    <property type="entry name" value="Ald_DH_C"/>
</dbReference>
<dbReference type="InterPro" id="IPR016162">
    <property type="entry name" value="Ald_DH_N"/>
</dbReference>
<dbReference type="InterPro" id="IPR015590">
    <property type="entry name" value="Aldehyde_DH_dom"/>
</dbReference>
<dbReference type="InterPro" id="IPR012394">
    <property type="entry name" value="Aldehyde_DH_NAD(P)"/>
</dbReference>
<dbReference type="PANTHER" id="PTHR43570">
    <property type="entry name" value="ALDEHYDE DEHYDROGENASE"/>
    <property type="match status" value="1"/>
</dbReference>
<dbReference type="PANTHER" id="PTHR43570:SF11">
    <property type="entry name" value="ALDEHYDE DEHYDROGENASE"/>
    <property type="match status" value="1"/>
</dbReference>
<dbReference type="Pfam" id="PF00171">
    <property type="entry name" value="Aldedh"/>
    <property type="match status" value="1"/>
</dbReference>
<dbReference type="PIRSF" id="PIRSF036492">
    <property type="entry name" value="ALDH"/>
    <property type="match status" value="1"/>
</dbReference>
<dbReference type="SUPFAM" id="SSF53720">
    <property type="entry name" value="ALDH-like"/>
    <property type="match status" value="1"/>
</dbReference>
<keyword id="KW-0125">Carotenoid biosynthesis</keyword>
<keyword id="KW-0520">NAD</keyword>
<keyword id="KW-0560">Oxidoreductase</keyword>
<keyword id="KW-1185">Reference proteome</keyword>
<evidence type="ECO:0000250" key="1">
    <source>
        <dbReference type="UniProtKB" id="P30838"/>
    </source>
</evidence>
<evidence type="ECO:0000269" key="2">
    <source>
    </source>
</evidence>
<evidence type="ECO:0000269" key="3">
    <source>
    </source>
</evidence>
<evidence type="ECO:0000269" key="4">
    <source>
    </source>
</evidence>
<evidence type="ECO:0000303" key="5">
    <source>
    </source>
</evidence>
<evidence type="ECO:0000303" key="6">
    <source>
    </source>
</evidence>
<evidence type="ECO:0000305" key="7"/>
<evidence type="ECO:0000305" key="8">
    <source>
    </source>
</evidence>